<evidence type="ECO:0000255" key="1">
    <source>
        <dbReference type="HAMAP-Rule" id="MF_01049"/>
    </source>
</evidence>
<feature type="chain" id="PRO_1000136241" description="L-carnitine/gamma-butyrobetaine antiporter">
    <location>
        <begin position="1"/>
        <end position="505"/>
    </location>
</feature>
<feature type="transmembrane region" description="Helical" evidence="1">
    <location>
        <begin position="10"/>
        <end position="30"/>
    </location>
</feature>
<feature type="transmembrane region" description="Helical" evidence="1">
    <location>
        <begin position="51"/>
        <end position="71"/>
    </location>
</feature>
<feature type="transmembrane region" description="Helical" evidence="1">
    <location>
        <begin position="92"/>
        <end position="112"/>
    </location>
</feature>
<feature type="transmembrane region" description="Helical" evidence="1">
    <location>
        <begin position="143"/>
        <end position="163"/>
    </location>
</feature>
<feature type="transmembrane region" description="Helical" evidence="1">
    <location>
        <begin position="195"/>
        <end position="215"/>
    </location>
</feature>
<feature type="transmembrane region" description="Helical" evidence="1">
    <location>
        <begin position="231"/>
        <end position="251"/>
    </location>
</feature>
<feature type="transmembrane region" description="Helical" evidence="1">
    <location>
        <begin position="263"/>
        <end position="283"/>
    </location>
</feature>
<feature type="transmembrane region" description="Helical" evidence="1">
    <location>
        <begin position="316"/>
        <end position="336"/>
    </location>
</feature>
<feature type="transmembrane region" description="Helical" evidence="1">
    <location>
        <begin position="347"/>
        <end position="367"/>
    </location>
</feature>
<feature type="transmembrane region" description="Helical" evidence="1">
    <location>
        <begin position="403"/>
        <end position="423"/>
    </location>
</feature>
<feature type="transmembrane region" description="Helical" evidence="1">
    <location>
        <begin position="446"/>
        <end position="466"/>
    </location>
</feature>
<feature type="transmembrane region" description="Helical" evidence="1">
    <location>
        <begin position="475"/>
        <end position="495"/>
    </location>
</feature>
<reference key="1">
    <citation type="journal article" date="2011" name="J. Bacteriol.">
        <title>Comparative genomics of 28 Salmonella enterica isolates: evidence for CRISPR-mediated adaptive sublineage evolution.</title>
        <authorList>
            <person name="Fricke W.F."/>
            <person name="Mammel M.K."/>
            <person name="McDermott P.F."/>
            <person name="Tartera C."/>
            <person name="White D.G."/>
            <person name="Leclerc J.E."/>
            <person name="Ravel J."/>
            <person name="Cebula T.A."/>
        </authorList>
    </citation>
    <scope>NUCLEOTIDE SEQUENCE [LARGE SCALE GENOMIC DNA]</scope>
    <source>
        <strain>SL476</strain>
    </source>
</reference>
<accession>B4TIH3</accession>
<comment type="function">
    <text evidence="1">Catalyzes the exchange of L-carnitine for gamma-butyrobetaine.</text>
</comment>
<comment type="catalytic activity">
    <reaction evidence="1">
        <text>4-(trimethylamino)butanoate(in) + (R)-carnitine(out) = 4-(trimethylamino)butanoate(out) + (R)-carnitine(in)</text>
        <dbReference type="Rhea" id="RHEA:29427"/>
        <dbReference type="ChEBI" id="CHEBI:16244"/>
        <dbReference type="ChEBI" id="CHEBI:16347"/>
    </reaction>
</comment>
<comment type="pathway">
    <text evidence="1">Amine and polyamine metabolism; carnitine metabolism.</text>
</comment>
<comment type="subunit">
    <text evidence="1">Homotrimer.</text>
</comment>
<comment type="subcellular location">
    <subcellularLocation>
        <location evidence="1">Cell inner membrane</location>
        <topology evidence="1">Multi-pass membrane protein</topology>
    </subcellularLocation>
</comment>
<comment type="similarity">
    <text evidence="1">Belongs to the BCCT transporter (TC 2.A.15) family. CaiT subfamily.</text>
</comment>
<gene>
    <name evidence="1" type="primary">caiT</name>
    <name type="ordered locus">SeHA_C0078</name>
</gene>
<name>CAIT_SALHS</name>
<proteinExistence type="inferred from homology"/>
<organism>
    <name type="scientific">Salmonella heidelberg (strain SL476)</name>
    <dbReference type="NCBI Taxonomy" id="454169"/>
    <lineage>
        <taxon>Bacteria</taxon>
        <taxon>Pseudomonadati</taxon>
        <taxon>Pseudomonadota</taxon>
        <taxon>Gammaproteobacteria</taxon>
        <taxon>Enterobacterales</taxon>
        <taxon>Enterobacteriaceae</taxon>
        <taxon>Salmonella</taxon>
    </lineage>
</organism>
<sequence length="505" mass="56643">MKNEKKKSGIEPKVFFPPLIIVGILCWLTVRDLDAANVVINAVFSYVTNVWGWAFEWYMVVMLFGWFWLVFGPYAKKRLGDEKPEFSTASWIFMMFASCTSAAVLFWGSIEIYYYISTPPFGLEPNSTGAKEIGLAYSLFHWGPLPWATYSFLSVAFAYFFFVRKMDVIRPSSTLVPLVGEKHAKGLFGTIVDNFYLVALIFAMGTSLGLATPLVTECMQWLFGIPHTLQLDAIIITCWIILNAICVACGLQKGVRIASDVRSYLSFLMLGWVFIVSGASFIMNYFTDSVGMLLMHLPRMLFYTDAIGKGGFPQGWTVFYWAWWVIYAIQMSIFLARISRGRTVRELCFGMVMGLTASTWILWTVLGSNTLLLMDKNILNIPQLIEQHGVARAIIETWAALPLSTATMWGFFILCFIATVTLINACSYTLAMSTCREVRDGEEPPLLVRIGWSVLVGIIGIVLLALGGLKPIQTAIIAGGCPLFFVNIMVTLSFIKDAKVHWKDK</sequence>
<protein>
    <recommendedName>
        <fullName evidence="1">L-carnitine/gamma-butyrobetaine antiporter</fullName>
    </recommendedName>
</protein>
<keyword id="KW-0050">Antiport</keyword>
<keyword id="KW-0997">Cell inner membrane</keyword>
<keyword id="KW-1003">Cell membrane</keyword>
<keyword id="KW-0472">Membrane</keyword>
<keyword id="KW-0812">Transmembrane</keyword>
<keyword id="KW-1133">Transmembrane helix</keyword>
<keyword id="KW-0813">Transport</keyword>
<dbReference type="EMBL" id="CP001120">
    <property type="protein sequence ID" value="ACF70289.1"/>
    <property type="molecule type" value="Genomic_DNA"/>
</dbReference>
<dbReference type="RefSeq" id="WP_000787073.1">
    <property type="nucleotide sequence ID" value="NC_011083.1"/>
</dbReference>
<dbReference type="SMR" id="B4TIH3"/>
<dbReference type="KEGG" id="seh:SeHA_C0078"/>
<dbReference type="HOGENOM" id="CLU_010118_6_0_6"/>
<dbReference type="UniPathway" id="UPA00117"/>
<dbReference type="Proteomes" id="UP000001866">
    <property type="component" value="Chromosome"/>
</dbReference>
<dbReference type="GO" id="GO:0005886">
    <property type="term" value="C:plasma membrane"/>
    <property type="evidence" value="ECO:0007669"/>
    <property type="project" value="UniProtKB-SubCell"/>
</dbReference>
<dbReference type="GO" id="GO:0044667">
    <property type="term" value="F:(R)-carnitine:4-(trimethylammonio)butanoate antiporter activity"/>
    <property type="evidence" value="ECO:0007669"/>
    <property type="project" value="UniProtKB-UniRule"/>
</dbReference>
<dbReference type="GO" id="GO:1900751">
    <property type="term" value="P:4-(trimethylammonio)butanoate transport"/>
    <property type="evidence" value="ECO:0007669"/>
    <property type="project" value="InterPro"/>
</dbReference>
<dbReference type="GO" id="GO:0009437">
    <property type="term" value="P:carnitine metabolic process"/>
    <property type="evidence" value="ECO:0007669"/>
    <property type="project" value="UniProtKB-UniRule"/>
</dbReference>
<dbReference type="HAMAP" id="MF_01049">
    <property type="entry name" value="CaiT"/>
    <property type="match status" value="1"/>
</dbReference>
<dbReference type="InterPro" id="IPR018093">
    <property type="entry name" value="BCCT_CS"/>
</dbReference>
<dbReference type="InterPro" id="IPR000060">
    <property type="entry name" value="BCCT_transptr"/>
</dbReference>
<dbReference type="InterPro" id="IPR023449">
    <property type="entry name" value="BCCT_transptr_CaiT"/>
</dbReference>
<dbReference type="NCBIfam" id="TIGR00842">
    <property type="entry name" value="bcct"/>
    <property type="match status" value="1"/>
</dbReference>
<dbReference type="NCBIfam" id="NF002887">
    <property type="entry name" value="PRK03356.1"/>
    <property type="match status" value="1"/>
</dbReference>
<dbReference type="PANTHER" id="PTHR30047">
    <property type="entry name" value="HIGH-AFFINITY CHOLINE TRANSPORT PROTEIN-RELATED"/>
    <property type="match status" value="1"/>
</dbReference>
<dbReference type="PANTHER" id="PTHR30047:SF11">
    <property type="entry name" value="L-CARNITINE_GAMMA-BUTYROBETAINE ANTIPORTER"/>
    <property type="match status" value="1"/>
</dbReference>
<dbReference type="Pfam" id="PF02028">
    <property type="entry name" value="BCCT"/>
    <property type="match status" value="1"/>
</dbReference>
<dbReference type="PROSITE" id="PS01303">
    <property type="entry name" value="BCCT"/>
    <property type="match status" value="1"/>
</dbReference>